<gene>
    <name evidence="1" type="primary">rpsG</name>
    <name type="ordered locus">LL2261</name>
    <name type="ORF">L0384</name>
</gene>
<organism>
    <name type="scientific">Lactococcus lactis subsp. lactis (strain IL1403)</name>
    <name type="common">Streptococcus lactis</name>
    <dbReference type="NCBI Taxonomy" id="272623"/>
    <lineage>
        <taxon>Bacteria</taxon>
        <taxon>Bacillati</taxon>
        <taxon>Bacillota</taxon>
        <taxon>Bacilli</taxon>
        <taxon>Lactobacillales</taxon>
        <taxon>Streptococcaceae</taxon>
        <taxon>Lactococcus</taxon>
    </lineage>
</organism>
<reference key="1">
    <citation type="journal article" date="2001" name="Genome Res.">
        <title>The complete genome sequence of the lactic acid bacterium Lactococcus lactis ssp. lactis IL1403.</title>
        <authorList>
            <person name="Bolotin A."/>
            <person name="Wincker P."/>
            <person name="Mauger S."/>
            <person name="Jaillon O."/>
            <person name="Malarme K."/>
            <person name="Weissenbach J."/>
            <person name="Ehrlich S.D."/>
            <person name="Sorokin A."/>
        </authorList>
    </citation>
    <scope>NUCLEOTIDE SEQUENCE [LARGE SCALE GENOMIC DNA]</scope>
    <source>
        <strain>IL1403</strain>
    </source>
</reference>
<proteinExistence type="inferred from homology"/>
<protein>
    <recommendedName>
        <fullName evidence="1">Small ribosomal subunit protein uS7</fullName>
    </recommendedName>
    <alternativeName>
        <fullName evidence="2">30S ribosomal protein S7</fullName>
    </alternativeName>
</protein>
<sequence length="155" mass="17683">MRKNRAPKREVLADPMYNSIVVTRLINRVMLDGKRGVAAQIVYGAFKQIEEATGNNPLEVFETAMENIMPVLEVRARRVGGSNYQVPVEVRPERRTTLGLRWLVTIARNRGEHTMQDRLAKEILDAANNTGAAVKKREDTHKMAEANRAFAHFRW</sequence>
<name>RS7_LACLA</name>
<evidence type="ECO:0000255" key="1">
    <source>
        <dbReference type="HAMAP-Rule" id="MF_00480"/>
    </source>
</evidence>
<evidence type="ECO:0000305" key="2"/>
<accession>Q9CDG0</accession>
<comment type="function">
    <text evidence="1">One of the primary rRNA binding proteins, it binds directly to 16S rRNA where it nucleates assembly of the head domain of the 30S subunit. Is located at the subunit interface close to the decoding center, probably blocks exit of the E-site tRNA.</text>
</comment>
<comment type="subunit">
    <text evidence="1">Part of the 30S ribosomal subunit. Contacts proteins S9 and S11.</text>
</comment>
<comment type="similarity">
    <text evidence="1">Belongs to the universal ribosomal protein uS7 family.</text>
</comment>
<keyword id="KW-1185">Reference proteome</keyword>
<keyword id="KW-0687">Ribonucleoprotein</keyword>
<keyword id="KW-0689">Ribosomal protein</keyword>
<keyword id="KW-0694">RNA-binding</keyword>
<keyword id="KW-0699">rRNA-binding</keyword>
<keyword id="KW-0820">tRNA-binding</keyword>
<dbReference type="EMBL" id="AE005176">
    <property type="protein sequence ID" value="AAK06359.1"/>
    <property type="molecule type" value="Genomic_DNA"/>
</dbReference>
<dbReference type="PIR" id="E86907">
    <property type="entry name" value="E86907"/>
</dbReference>
<dbReference type="RefSeq" id="NP_268418.1">
    <property type="nucleotide sequence ID" value="NC_002662.1"/>
</dbReference>
<dbReference type="RefSeq" id="WP_003129876.1">
    <property type="nucleotide sequence ID" value="NC_002662.1"/>
</dbReference>
<dbReference type="SMR" id="Q9CDG0"/>
<dbReference type="PaxDb" id="272623-L0384"/>
<dbReference type="EnsemblBacteria" id="AAK06359">
    <property type="protein sequence ID" value="AAK06359"/>
    <property type="gene ID" value="L0384"/>
</dbReference>
<dbReference type="GeneID" id="89634663"/>
<dbReference type="KEGG" id="lla:L0384"/>
<dbReference type="PATRIC" id="fig|272623.7.peg.2426"/>
<dbReference type="eggNOG" id="COG0049">
    <property type="taxonomic scope" value="Bacteria"/>
</dbReference>
<dbReference type="HOGENOM" id="CLU_072226_1_1_9"/>
<dbReference type="OrthoDB" id="9807653at2"/>
<dbReference type="Proteomes" id="UP000002196">
    <property type="component" value="Chromosome"/>
</dbReference>
<dbReference type="GO" id="GO:0015935">
    <property type="term" value="C:small ribosomal subunit"/>
    <property type="evidence" value="ECO:0007669"/>
    <property type="project" value="InterPro"/>
</dbReference>
<dbReference type="GO" id="GO:0019843">
    <property type="term" value="F:rRNA binding"/>
    <property type="evidence" value="ECO:0007669"/>
    <property type="project" value="UniProtKB-UniRule"/>
</dbReference>
<dbReference type="GO" id="GO:0003735">
    <property type="term" value="F:structural constituent of ribosome"/>
    <property type="evidence" value="ECO:0007669"/>
    <property type="project" value="InterPro"/>
</dbReference>
<dbReference type="GO" id="GO:0000049">
    <property type="term" value="F:tRNA binding"/>
    <property type="evidence" value="ECO:0007669"/>
    <property type="project" value="UniProtKB-UniRule"/>
</dbReference>
<dbReference type="GO" id="GO:0006412">
    <property type="term" value="P:translation"/>
    <property type="evidence" value="ECO:0007669"/>
    <property type="project" value="UniProtKB-UniRule"/>
</dbReference>
<dbReference type="CDD" id="cd14869">
    <property type="entry name" value="uS7_Bacteria"/>
    <property type="match status" value="1"/>
</dbReference>
<dbReference type="FunFam" id="1.10.455.10:FF:000001">
    <property type="entry name" value="30S ribosomal protein S7"/>
    <property type="match status" value="1"/>
</dbReference>
<dbReference type="Gene3D" id="1.10.455.10">
    <property type="entry name" value="Ribosomal protein S7 domain"/>
    <property type="match status" value="1"/>
</dbReference>
<dbReference type="HAMAP" id="MF_00480_B">
    <property type="entry name" value="Ribosomal_uS7_B"/>
    <property type="match status" value="1"/>
</dbReference>
<dbReference type="InterPro" id="IPR000235">
    <property type="entry name" value="Ribosomal_uS7"/>
</dbReference>
<dbReference type="InterPro" id="IPR005717">
    <property type="entry name" value="Ribosomal_uS7_bac/org-type"/>
</dbReference>
<dbReference type="InterPro" id="IPR020606">
    <property type="entry name" value="Ribosomal_uS7_CS"/>
</dbReference>
<dbReference type="InterPro" id="IPR023798">
    <property type="entry name" value="Ribosomal_uS7_dom"/>
</dbReference>
<dbReference type="InterPro" id="IPR036823">
    <property type="entry name" value="Ribosomal_uS7_dom_sf"/>
</dbReference>
<dbReference type="NCBIfam" id="TIGR01029">
    <property type="entry name" value="rpsG_bact"/>
    <property type="match status" value="1"/>
</dbReference>
<dbReference type="PANTHER" id="PTHR11205">
    <property type="entry name" value="RIBOSOMAL PROTEIN S7"/>
    <property type="match status" value="1"/>
</dbReference>
<dbReference type="Pfam" id="PF00177">
    <property type="entry name" value="Ribosomal_S7"/>
    <property type="match status" value="1"/>
</dbReference>
<dbReference type="PIRSF" id="PIRSF002122">
    <property type="entry name" value="RPS7p_RPS7a_RPS5e_RPS7o"/>
    <property type="match status" value="1"/>
</dbReference>
<dbReference type="SUPFAM" id="SSF47973">
    <property type="entry name" value="Ribosomal protein S7"/>
    <property type="match status" value="1"/>
</dbReference>
<dbReference type="PROSITE" id="PS00052">
    <property type="entry name" value="RIBOSOMAL_S7"/>
    <property type="match status" value="1"/>
</dbReference>
<feature type="chain" id="PRO_0000124277" description="Small ribosomal subunit protein uS7">
    <location>
        <begin position="1"/>
        <end position="155"/>
    </location>
</feature>